<comment type="function">
    <text evidence="1">Necessary for normal cell division and for the maintenance of normal septation.</text>
</comment>
<comment type="cofactor">
    <cofactor evidence="1">
        <name>Mg(2+)</name>
        <dbReference type="ChEBI" id="CHEBI:18420"/>
    </cofactor>
</comment>
<comment type="similarity">
    <text evidence="1">Belongs to the TRAFAC class TrmE-Era-EngA-EngB-Septin-like GTPase superfamily. EngB GTPase family.</text>
</comment>
<keyword id="KW-0131">Cell cycle</keyword>
<keyword id="KW-0132">Cell division</keyword>
<keyword id="KW-0342">GTP-binding</keyword>
<keyword id="KW-0460">Magnesium</keyword>
<keyword id="KW-0479">Metal-binding</keyword>
<keyword id="KW-0547">Nucleotide-binding</keyword>
<keyword id="KW-1185">Reference proteome</keyword>
<keyword id="KW-0717">Septation</keyword>
<sequence length="205" mass="23073">MTEFKSAPAYQEAKYLTSAAEFDQLPPDQGAEIAFIGRSNAGKSSALNIITGIKGLARTSKTPGRTQMINFFALNEHERLVDLPGYGYAKVPRMVQKRWEELVDSYLKNRRCLKGLVVVMDIRHPLKEMDEDVIEWAVNYDIPIHILLTKSDKLSQNAAKKTLGEVQTAISAYGEKLTLQLFSSHDRTGLDEVKAVLSQWFRSEP</sequence>
<reference key="1">
    <citation type="journal article" date="2003" name="Proc. Natl. Acad. Sci. U.S.A.">
        <title>Complete genome sequence of the Q-fever pathogen, Coxiella burnetii.</title>
        <authorList>
            <person name="Seshadri R."/>
            <person name="Paulsen I.T."/>
            <person name="Eisen J.A."/>
            <person name="Read T.D."/>
            <person name="Nelson K.E."/>
            <person name="Nelson W.C."/>
            <person name="Ward N.L."/>
            <person name="Tettelin H."/>
            <person name="Davidsen T.M."/>
            <person name="Beanan M.J."/>
            <person name="DeBoy R.T."/>
            <person name="Daugherty S.C."/>
            <person name="Brinkac L.M."/>
            <person name="Madupu R."/>
            <person name="Dodson R.J."/>
            <person name="Khouri H.M."/>
            <person name="Lee K.H."/>
            <person name="Carty H.A."/>
            <person name="Scanlan D."/>
            <person name="Heinzen R.A."/>
            <person name="Thompson H.A."/>
            <person name="Samuel J.E."/>
            <person name="Fraser C.M."/>
            <person name="Heidelberg J.F."/>
        </authorList>
    </citation>
    <scope>NUCLEOTIDE SEQUENCE [LARGE SCALE GENOMIC DNA]</scope>
    <source>
        <strain>RSA 493 / Nine Mile phase I</strain>
    </source>
</reference>
<proteinExistence type="inferred from homology"/>
<feature type="chain" id="PRO_0000266847" description="Probable GTP-binding protein EngB">
    <location>
        <begin position="1"/>
        <end position="205"/>
    </location>
</feature>
<feature type="domain" description="EngB-type G" evidence="1">
    <location>
        <begin position="29"/>
        <end position="203"/>
    </location>
</feature>
<feature type="binding site" evidence="1">
    <location>
        <begin position="37"/>
        <end position="44"/>
    </location>
    <ligand>
        <name>GTP</name>
        <dbReference type="ChEBI" id="CHEBI:37565"/>
    </ligand>
</feature>
<feature type="binding site" evidence="1">
    <location>
        <position position="44"/>
    </location>
    <ligand>
        <name>Mg(2+)</name>
        <dbReference type="ChEBI" id="CHEBI:18420"/>
    </ligand>
</feature>
<feature type="binding site" evidence="1">
    <location>
        <begin position="64"/>
        <end position="68"/>
    </location>
    <ligand>
        <name>GTP</name>
        <dbReference type="ChEBI" id="CHEBI:37565"/>
    </ligand>
</feature>
<feature type="binding site" evidence="1">
    <location>
        <position position="66"/>
    </location>
    <ligand>
        <name>Mg(2+)</name>
        <dbReference type="ChEBI" id="CHEBI:18420"/>
    </ligand>
</feature>
<feature type="binding site" evidence="1">
    <location>
        <begin position="82"/>
        <end position="85"/>
    </location>
    <ligand>
        <name>GTP</name>
        <dbReference type="ChEBI" id="CHEBI:37565"/>
    </ligand>
</feature>
<feature type="binding site" evidence="1">
    <location>
        <begin position="149"/>
        <end position="152"/>
    </location>
    <ligand>
        <name>GTP</name>
        <dbReference type="ChEBI" id="CHEBI:37565"/>
    </ligand>
</feature>
<feature type="binding site" evidence="1">
    <location>
        <begin position="182"/>
        <end position="184"/>
    </location>
    <ligand>
        <name>GTP</name>
        <dbReference type="ChEBI" id="CHEBI:37565"/>
    </ligand>
</feature>
<organism>
    <name type="scientific">Coxiella burnetii (strain RSA 493 / Nine Mile phase I)</name>
    <dbReference type="NCBI Taxonomy" id="227377"/>
    <lineage>
        <taxon>Bacteria</taxon>
        <taxon>Pseudomonadati</taxon>
        <taxon>Pseudomonadota</taxon>
        <taxon>Gammaproteobacteria</taxon>
        <taxon>Legionellales</taxon>
        <taxon>Coxiellaceae</taxon>
        <taxon>Coxiella</taxon>
    </lineage>
</organism>
<evidence type="ECO:0000255" key="1">
    <source>
        <dbReference type="HAMAP-Rule" id="MF_00321"/>
    </source>
</evidence>
<accession>Q83AV6</accession>
<name>ENGB_COXBU</name>
<dbReference type="EMBL" id="AE016828">
    <property type="protein sequence ID" value="AAO91266.1"/>
    <property type="molecule type" value="Genomic_DNA"/>
</dbReference>
<dbReference type="RefSeq" id="WP_010958433.1">
    <property type="nucleotide sequence ID" value="NC_002971.4"/>
</dbReference>
<dbReference type="SMR" id="Q83AV6"/>
<dbReference type="STRING" id="227377.CBU_1772"/>
<dbReference type="DNASU" id="1209683"/>
<dbReference type="EnsemblBacteria" id="AAO91266">
    <property type="protein sequence ID" value="AAO91266"/>
    <property type="gene ID" value="CBU_1772"/>
</dbReference>
<dbReference type="KEGG" id="cbu:CBU_1772"/>
<dbReference type="PATRIC" id="fig|227377.7.peg.1760"/>
<dbReference type="eggNOG" id="COG0218">
    <property type="taxonomic scope" value="Bacteria"/>
</dbReference>
<dbReference type="HOGENOM" id="CLU_033732_1_0_6"/>
<dbReference type="OrthoDB" id="9804921at2"/>
<dbReference type="Proteomes" id="UP000002671">
    <property type="component" value="Chromosome"/>
</dbReference>
<dbReference type="GO" id="GO:0005829">
    <property type="term" value="C:cytosol"/>
    <property type="evidence" value="ECO:0000318"/>
    <property type="project" value="GO_Central"/>
</dbReference>
<dbReference type="GO" id="GO:0005525">
    <property type="term" value="F:GTP binding"/>
    <property type="evidence" value="ECO:0007669"/>
    <property type="project" value="UniProtKB-UniRule"/>
</dbReference>
<dbReference type="GO" id="GO:0046872">
    <property type="term" value="F:metal ion binding"/>
    <property type="evidence" value="ECO:0007669"/>
    <property type="project" value="UniProtKB-KW"/>
</dbReference>
<dbReference type="GO" id="GO:0000917">
    <property type="term" value="P:division septum assembly"/>
    <property type="evidence" value="ECO:0007669"/>
    <property type="project" value="UniProtKB-KW"/>
</dbReference>
<dbReference type="CDD" id="cd01876">
    <property type="entry name" value="YihA_EngB"/>
    <property type="match status" value="1"/>
</dbReference>
<dbReference type="FunFam" id="3.40.50.300:FF:000098">
    <property type="entry name" value="Probable GTP-binding protein EngB"/>
    <property type="match status" value="1"/>
</dbReference>
<dbReference type="Gene3D" id="3.40.50.300">
    <property type="entry name" value="P-loop containing nucleotide triphosphate hydrolases"/>
    <property type="match status" value="1"/>
</dbReference>
<dbReference type="HAMAP" id="MF_00321">
    <property type="entry name" value="GTPase_EngB"/>
    <property type="match status" value="1"/>
</dbReference>
<dbReference type="InterPro" id="IPR030393">
    <property type="entry name" value="G_ENGB_dom"/>
</dbReference>
<dbReference type="InterPro" id="IPR006073">
    <property type="entry name" value="GTP-bd"/>
</dbReference>
<dbReference type="InterPro" id="IPR019987">
    <property type="entry name" value="GTP-bd_ribosome_bio_YsxC"/>
</dbReference>
<dbReference type="InterPro" id="IPR027417">
    <property type="entry name" value="P-loop_NTPase"/>
</dbReference>
<dbReference type="NCBIfam" id="TIGR03598">
    <property type="entry name" value="GTPase_YsxC"/>
    <property type="match status" value="1"/>
</dbReference>
<dbReference type="PANTHER" id="PTHR11649:SF13">
    <property type="entry name" value="ENGB-TYPE G DOMAIN-CONTAINING PROTEIN"/>
    <property type="match status" value="1"/>
</dbReference>
<dbReference type="PANTHER" id="PTHR11649">
    <property type="entry name" value="MSS1/TRME-RELATED GTP-BINDING PROTEIN"/>
    <property type="match status" value="1"/>
</dbReference>
<dbReference type="Pfam" id="PF01926">
    <property type="entry name" value="MMR_HSR1"/>
    <property type="match status" value="1"/>
</dbReference>
<dbReference type="SUPFAM" id="SSF52540">
    <property type="entry name" value="P-loop containing nucleoside triphosphate hydrolases"/>
    <property type="match status" value="1"/>
</dbReference>
<dbReference type="PROSITE" id="PS51706">
    <property type="entry name" value="G_ENGB"/>
    <property type="match status" value="1"/>
</dbReference>
<gene>
    <name evidence="1" type="primary">engB</name>
    <name type="ordered locus">CBU_1772</name>
</gene>
<protein>
    <recommendedName>
        <fullName evidence="1">Probable GTP-binding protein EngB</fullName>
    </recommendedName>
</protein>